<sequence>MGNSALRAHVETAQKTGVFQLKDRGLTEFPADLQKLTSNLRTIDLSNNKIESLPPLLIGKFTLLKSLSLNNNKLTVLPDEICNLKKLETLSLNNNHLRELPSTFGQLSALKTLSLSGNQLGALPPQLCSLRHLDVMDLSKNQIRSIPDSVGELQVIELNLNQNQISQISVKISCCPRLKILRLEENCLELSMLPQSILSDSQICLLAVEGNLFEIKKLRELEGYDKYMERFTATKKKFA</sequence>
<name>LRC57_HUMAN</name>
<feature type="initiator methionine" description="Removed" evidence="1">
    <location>
        <position position="1"/>
    </location>
</feature>
<feature type="chain" id="PRO_0000227778" description="Leucine-rich repeat-containing protein 57">
    <location>
        <begin position="2"/>
        <end position="239"/>
    </location>
</feature>
<feature type="repeat" description="LRR 1">
    <location>
        <begin position="39"/>
        <end position="60"/>
    </location>
</feature>
<feature type="repeat" description="LRR 2">
    <location>
        <begin position="63"/>
        <end position="84"/>
    </location>
</feature>
<feature type="repeat" description="LRR 3">
    <location>
        <begin position="86"/>
        <end position="107"/>
    </location>
</feature>
<feature type="repeat" description="LRR 4">
    <location>
        <begin position="109"/>
        <end position="131"/>
    </location>
</feature>
<feature type="repeat" description="LRR 5">
    <location>
        <begin position="132"/>
        <end position="153"/>
    </location>
</feature>
<feature type="repeat" description="LRR 6">
    <location>
        <begin position="154"/>
        <end position="175"/>
    </location>
</feature>
<feature type="repeat" description="LRR 7">
    <location>
        <begin position="177"/>
        <end position="197"/>
    </location>
</feature>
<feature type="repeat" description="LRR 8">
    <location>
        <begin position="202"/>
        <end position="222"/>
    </location>
</feature>
<feature type="lipid moiety-binding region" description="N-myristoyl glycine" evidence="1">
    <location>
        <position position="2"/>
    </location>
</feature>
<feature type="sequence conflict" description="In Ref. 2; CAD98097." evidence="2" ref="2">
    <original>N</original>
    <variation>S</variation>
    <location>
        <position position="71"/>
    </location>
</feature>
<feature type="sequence conflict" description="In Ref. 1; BAC04451." evidence="2" ref="1">
    <original>K</original>
    <variation>N</variation>
    <location>
        <position position="237"/>
    </location>
</feature>
<proteinExistence type="evidence at protein level"/>
<comment type="subcellular location">
    <subcellularLocation>
        <location evidence="2">Membrane</location>
        <topology evidence="2">Lipid-anchor</topology>
    </subcellularLocation>
</comment>
<organism>
    <name type="scientific">Homo sapiens</name>
    <name type="common">Human</name>
    <dbReference type="NCBI Taxonomy" id="9606"/>
    <lineage>
        <taxon>Eukaryota</taxon>
        <taxon>Metazoa</taxon>
        <taxon>Chordata</taxon>
        <taxon>Craniata</taxon>
        <taxon>Vertebrata</taxon>
        <taxon>Euteleostomi</taxon>
        <taxon>Mammalia</taxon>
        <taxon>Eutheria</taxon>
        <taxon>Euarchontoglires</taxon>
        <taxon>Primates</taxon>
        <taxon>Haplorrhini</taxon>
        <taxon>Catarrhini</taxon>
        <taxon>Hominidae</taxon>
        <taxon>Homo</taxon>
    </lineage>
</organism>
<dbReference type="EMBL" id="AK094131">
    <property type="protein sequence ID" value="BAC04294.1"/>
    <property type="molecule type" value="mRNA"/>
</dbReference>
<dbReference type="EMBL" id="AK094891">
    <property type="protein sequence ID" value="BAC04451.1"/>
    <property type="molecule type" value="mRNA"/>
</dbReference>
<dbReference type="EMBL" id="CR749223">
    <property type="protein sequence ID" value="CAH18079.1"/>
    <property type="molecule type" value="mRNA"/>
</dbReference>
<dbReference type="EMBL" id="BX538324">
    <property type="protein sequence ID" value="CAD98097.1"/>
    <property type="molecule type" value="mRNA"/>
</dbReference>
<dbReference type="EMBL" id="BC058935">
    <property type="protein sequence ID" value="AAH58935.1"/>
    <property type="molecule type" value="mRNA"/>
</dbReference>
<dbReference type="CCDS" id="CCDS10089.1"/>
<dbReference type="RefSeq" id="NP_694992.2">
    <property type="nucleotide sequence ID" value="NM_153260.3"/>
</dbReference>
<dbReference type="RefSeq" id="XP_047288291.1">
    <property type="nucleotide sequence ID" value="XM_047432335.1"/>
</dbReference>
<dbReference type="RefSeq" id="XP_054233629.1">
    <property type="nucleotide sequence ID" value="XM_054377654.1"/>
</dbReference>
<dbReference type="SMR" id="Q8N9N7"/>
<dbReference type="BioGRID" id="129089">
    <property type="interactions" value="48"/>
</dbReference>
<dbReference type="FunCoup" id="Q8N9N7">
    <property type="interactions" value="360"/>
</dbReference>
<dbReference type="IntAct" id="Q8N9N7">
    <property type="interactions" value="13"/>
</dbReference>
<dbReference type="MINT" id="Q8N9N7"/>
<dbReference type="STRING" id="9606.ENSP00000326817"/>
<dbReference type="iPTMnet" id="Q8N9N7"/>
<dbReference type="PhosphoSitePlus" id="Q8N9N7"/>
<dbReference type="BioMuta" id="LRRC57"/>
<dbReference type="DMDM" id="74760039"/>
<dbReference type="jPOST" id="Q8N9N7"/>
<dbReference type="MassIVE" id="Q8N9N7"/>
<dbReference type="PaxDb" id="9606-ENSP00000326817"/>
<dbReference type="PeptideAtlas" id="Q8N9N7"/>
<dbReference type="ProteomicsDB" id="72569"/>
<dbReference type="Pumba" id="Q8N9N7"/>
<dbReference type="Antibodypedia" id="23691">
    <property type="antibodies" value="142 antibodies from 19 providers"/>
</dbReference>
<dbReference type="DNASU" id="255252"/>
<dbReference type="Ensembl" id="ENST00000323443.6">
    <property type="protein sequence ID" value="ENSP00000326817.2"/>
    <property type="gene ID" value="ENSG00000180979.10"/>
</dbReference>
<dbReference type="Ensembl" id="ENST00000397130.8">
    <property type="protein sequence ID" value="ENSP00000380319.3"/>
    <property type="gene ID" value="ENSG00000180979.10"/>
</dbReference>
<dbReference type="Ensembl" id="ENST00000563454.5">
    <property type="protein sequence ID" value="ENSP00000455445.1"/>
    <property type="gene ID" value="ENSG00000180979.10"/>
</dbReference>
<dbReference type="GeneID" id="255252"/>
<dbReference type="KEGG" id="hsa:255252"/>
<dbReference type="MANE-Select" id="ENST00000397130.8">
    <property type="protein sequence ID" value="ENSP00000380319.3"/>
    <property type="RefSeq nucleotide sequence ID" value="NM_153260.3"/>
    <property type="RefSeq protein sequence ID" value="NP_694992.2"/>
</dbReference>
<dbReference type="UCSC" id="uc001zqc.4">
    <property type="organism name" value="human"/>
</dbReference>
<dbReference type="AGR" id="HGNC:26719"/>
<dbReference type="CTD" id="255252"/>
<dbReference type="DisGeNET" id="255252"/>
<dbReference type="GeneCards" id="LRRC57"/>
<dbReference type="HGNC" id="HGNC:26719">
    <property type="gene designation" value="LRRC57"/>
</dbReference>
<dbReference type="HPA" id="ENSG00000180979">
    <property type="expression patterns" value="Low tissue specificity"/>
</dbReference>
<dbReference type="neXtProt" id="NX_Q8N9N7"/>
<dbReference type="OpenTargets" id="ENSG00000180979"/>
<dbReference type="PharmGKB" id="PA142671516"/>
<dbReference type="VEuPathDB" id="HostDB:ENSG00000180979"/>
<dbReference type="eggNOG" id="KOG0619">
    <property type="taxonomic scope" value="Eukaryota"/>
</dbReference>
<dbReference type="GeneTree" id="ENSGT00940000157393"/>
<dbReference type="InParanoid" id="Q8N9N7"/>
<dbReference type="OMA" id="CEYMERY"/>
<dbReference type="OrthoDB" id="1728874at2759"/>
<dbReference type="PAN-GO" id="Q8N9N7">
    <property type="GO annotations" value="0 GO annotations based on evolutionary models"/>
</dbReference>
<dbReference type="PhylomeDB" id="Q8N9N7"/>
<dbReference type="TreeFam" id="TF326481"/>
<dbReference type="PathwayCommons" id="Q8N9N7"/>
<dbReference type="SignaLink" id="Q8N9N7"/>
<dbReference type="BioGRID-ORCS" id="255252">
    <property type="hits" value="22 hits in 1160 CRISPR screens"/>
</dbReference>
<dbReference type="CD-CODE" id="FB4E32DD">
    <property type="entry name" value="Presynaptic clusters and postsynaptic densities"/>
</dbReference>
<dbReference type="ChiTaRS" id="LRRC57">
    <property type="organism name" value="human"/>
</dbReference>
<dbReference type="GeneWiki" id="LRRC57"/>
<dbReference type="GenomeRNAi" id="255252"/>
<dbReference type="Pharos" id="Q8N9N7">
    <property type="development level" value="Tdark"/>
</dbReference>
<dbReference type="PRO" id="PR:Q8N9N7"/>
<dbReference type="Proteomes" id="UP000005640">
    <property type="component" value="Chromosome 15"/>
</dbReference>
<dbReference type="RNAct" id="Q8N9N7">
    <property type="molecule type" value="protein"/>
</dbReference>
<dbReference type="Bgee" id="ENSG00000180979">
    <property type="expression patterns" value="Expressed in amniotic fluid and 177 other cell types or tissues"/>
</dbReference>
<dbReference type="ExpressionAtlas" id="Q8N9N7">
    <property type="expression patterns" value="baseline and differential"/>
</dbReference>
<dbReference type="GO" id="GO:0070062">
    <property type="term" value="C:extracellular exosome"/>
    <property type="evidence" value="ECO:0007005"/>
    <property type="project" value="UniProtKB"/>
</dbReference>
<dbReference type="GO" id="GO:0016020">
    <property type="term" value="C:membrane"/>
    <property type="evidence" value="ECO:0007669"/>
    <property type="project" value="UniProtKB-SubCell"/>
</dbReference>
<dbReference type="FunFam" id="3.80.10.10:FF:000458">
    <property type="entry name" value="Leucine rich repeat containing 57"/>
    <property type="match status" value="1"/>
</dbReference>
<dbReference type="FunFam" id="3.80.10.10:FF:000230">
    <property type="entry name" value="Leucine-rich repeat-containing protein 57"/>
    <property type="match status" value="1"/>
</dbReference>
<dbReference type="Gene3D" id="3.80.10.10">
    <property type="entry name" value="Ribonuclease Inhibitor"/>
    <property type="match status" value="2"/>
</dbReference>
<dbReference type="InterPro" id="IPR001611">
    <property type="entry name" value="Leu-rich_rpt"/>
</dbReference>
<dbReference type="InterPro" id="IPR003591">
    <property type="entry name" value="Leu-rich_rpt_typical-subtyp"/>
</dbReference>
<dbReference type="InterPro" id="IPR032675">
    <property type="entry name" value="LRR_dom_sf"/>
</dbReference>
<dbReference type="InterPro" id="IPR050216">
    <property type="entry name" value="LRR_domain-containing"/>
</dbReference>
<dbReference type="InterPro" id="IPR055414">
    <property type="entry name" value="LRR_R13L4/SHOC2-like"/>
</dbReference>
<dbReference type="PANTHER" id="PTHR48051">
    <property type="match status" value="1"/>
</dbReference>
<dbReference type="PANTHER" id="PTHR48051:SF62">
    <property type="entry name" value="LEUCINE-RICH REPEAT-CONTAINING PROTEIN 57"/>
    <property type="match status" value="1"/>
</dbReference>
<dbReference type="Pfam" id="PF23598">
    <property type="entry name" value="LRR_14"/>
    <property type="match status" value="1"/>
</dbReference>
<dbReference type="Pfam" id="PF13855">
    <property type="entry name" value="LRR_8"/>
    <property type="match status" value="1"/>
</dbReference>
<dbReference type="PRINTS" id="PR00019">
    <property type="entry name" value="LEURICHRPT"/>
</dbReference>
<dbReference type="SMART" id="SM00364">
    <property type="entry name" value="LRR_BAC"/>
    <property type="match status" value="5"/>
</dbReference>
<dbReference type="SMART" id="SM00369">
    <property type="entry name" value="LRR_TYP"/>
    <property type="match status" value="5"/>
</dbReference>
<dbReference type="SUPFAM" id="SSF52058">
    <property type="entry name" value="L domain-like"/>
    <property type="match status" value="1"/>
</dbReference>
<dbReference type="PROSITE" id="PS51450">
    <property type="entry name" value="LRR"/>
    <property type="match status" value="7"/>
</dbReference>
<reference key="1">
    <citation type="journal article" date="2004" name="Nat. Genet.">
        <title>Complete sequencing and characterization of 21,243 full-length human cDNAs.</title>
        <authorList>
            <person name="Ota T."/>
            <person name="Suzuki Y."/>
            <person name="Nishikawa T."/>
            <person name="Otsuki T."/>
            <person name="Sugiyama T."/>
            <person name="Irie R."/>
            <person name="Wakamatsu A."/>
            <person name="Hayashi K."/>
            <person name="Sato H."/>
            <person name="Nagai K."/>
            <person name="Kimura K."/>
            <person name="Makita H."/>
            <person name="Sekine M."/>
            <person name="Obayashi M."/>
            <person name="Nishi T."/>
            <person name="Shibahara T."/>
            <person name="Tanaka T."/>
            <person name="Ishii S."/>
            <person name="Yamamoto J."/>
            <person name="Saito K."/>
            <person name="Kawai Y."/>
            <person name="Isono Y."/>
            <person name="Nakamura Y."/>
            <person name="Nagahari K."/>
            <person name="Murakami K."/>
            <person name="Yasuda T."/>
            <person name="Iwayanagi T."/>
            <person name="Wagatsuma M."/>
            <person name="Shiratori A."/>
            <person name="Sudo H."/>
            <person name="Hosoiri T."/>
            <person name="Kaku Y."/>
            <person name="Kodaira H."/>
            <person name="Kondo H."/>
            <person name="Sugawara M."/>
            <person name="Takahashi M."/>
            <person name="Kanda K."/>
            <person name="Yokoi T."/>
            <person name="Furuya T."/>
            <person name="Kikkawa E."/>
            <person name="Omura Y."/>
            <person name="Abe K."/>
            <person name="Kamihara K."/>
            <person name="Katsuta N."/>
            <person name="Sato K."/>
            <person name="Tanikawa M."/>
            <person name="Yamazaki M."/>
            <person name="Ninomiya K."/>
            <person name="Ishibashi T."/>
            <person name="Yamashita H."/>
            <person name="Murakawa K."/>
            <person name="Fujimori K."/>
            <person name="Tanai H."/>
            <person name="Kimata M."/>
            <person name="Watanabe M."/>
            <person name="Hiraoka S."/>
            <person name="Chiba Y."/>
            <person name="Ishida S."/>
            <person name="Ono Y."/>
            <person name="Takiguchi S."/>
            <person name="Watanabe S."/>
            <person name="Yosida M."/>
            <person name="Hotuta T."/>
            <person name="Kusano J."/>
            <person name="Kanehori K."/>
            <person name="Takahashi-Fujii A."/>
            <person name="Hara H."/>
            <person name="Tanase T.-O."/>
            <person name="Nomura Y."/>
            <person name="Togiya S."/>
            <person name="Komai F."/>
            <person name="Hara R."/>
            <person name="Takeuchi K."/>
            <person name="Arita M."/>
            <person name="Imose N."/>
            <person name="Musashino K."/>
            <person name="Yuuki H."/>
            <person name="Oshima A."/>
            <person name="Sasaki N."/>
            <person name="Aotsuka S."/>
            <person name="Yoshikawa Y."/>
            <person name="Matsunawa H."/>
            <person name="Ichihara T."/>
            <person name="Shiohata N."/>
            <person name="Sano S."/>
            <person name="Moriya S."/>
            <person name="Momiyama H."/>
            <person name="Satoh N."/>
            <person name="Takami S."/>
            <person name="Terashima Y."/>
            <person name="Suzuki O."/>
            <person name="Nakagawa S."/>
            <person name="Senoh A."/>
            <person name="Mizoguchi H."/>
            <person name="Goto Y."/>
            <person name="Shimizu F."/>
            <person name="Wakebe H."/>
            <person name="Hishigaki H."/>
            <person name="Watanabe T."/>
            <person name="Sugiyama A."/>
            <person name="Takemoto M."/>
            <person name="Kawakami B."/>
            <person name="Yamazaki M."/>
            <person name="Watanabe K."/>
            <person name="Kumagai A."/>
            <person name="Itakura S."/>
            <person name="Fukuzumi Y."/>
            <person name="Fujimori Y."/>
            <person name="Komiyama M."/>
            <person name="Tashiro H."/>
            <person name="Tanigami A."/>
            <person name="Fujiwara T."/>
            <person name="Ono T."/>
            <person name="Yamada K."/>
            <person name="Fujii Y."/>
            <person name="Ozaki K."/>
            <person name="Hirao M."/>
            <person name="Ohmori Y."/>
            <person name="Kawabata A."/>
            <person name="Hikiji T."/>
            <person name="Kobatake N."/>
            <person name="Inagaki H."/>
            <person name="Ikema Y."/>
            <person name="Okamoto S."/>
            <person name="Okitani R."/>
            <person name="Kawakami T."/>
            <person name="Noguchi S."/>
            <person name="Itoh T."/>
            <person name="Shigeta K."/>
            <person name="Senba T."/>
            <person name="Matsumura K."/>
            <person name="Nakajima Y."/>
            <person name="Mizuno T."/>
            <person name="Morinaga M."/>
            <person name="Sasaki M."/>
            <person name="Togashi T."/>
            <person name="Oyama M."/>
            <person name="Hata H."/>
            <person name="Watanabe M."/>
            <person name="Komatsu T."/>
            <person name="Mizushima-Sugano J."/>
            <person name="Satoh T."/>
            <person name="Shirai Y."/>
            <person name="Takahashi Y."/>
            <person name="Nakagawa K."/>
            <person name="Okumura K."/>
            <person name="Nagase T."/>
            <person name="Nomura N."/>
            <person name="Kikuchi H."/>
            <person name="Masuho Y."/>
            <person name="Yamashita R."/>
            <person name="Nakai K."/>
            <person name="Yada T."/>
            <person name="Nakamura Y."/>
            <person name="Ohara O."/>
            <person name="Isogai T."/>
            <person name="Sugano S."/>
        </authorList>
    </citation>
    <scope>NUCLEOTIDE SEQUENCE [LARGE SCALE MRNA]</scope>
    <source>
        <tissue>Corpus callosum</tissue>
    </source>
</reference>
<reference key="2">
    <citation type="journal article" date="2007" name="BMC Genomics">
        <title>The full-ORF clone resource of the German cDNA consortium.</title>
        <authorList>
            <person name="Bechtel S."/>
            <person name="Rosenfelder H."/>
            <person name="Duda A."/>
            <person name="Schmidt C.P."/>
            <person name="Ernst U."/>
            <person name="Wellenreuther R."/>
            <person name="Mehrle A."/>
            <person name="Schuster C."/>
            <person name="Bahr A."/>
            <person name="Bloecker H."/>
            <person name="Heubner D."/>
            <person name="Hoerlein A."/>
            <person name="Michel G."/>
            <person name="Wedler H."/>
            <person name="Koehrer K."/>
            <person name="Ottenwaelder B."/>
            <person name="Poustka A."/>
            <person name="Wiemann S."/>
            <person name="Schupp I."/>
        </authorList>
    </citation>
    <scope>NUCLEOTIDE SEQUENCE [LARGE SCALE MRNA]</scope>
    <source>
        <tissue>Endometrium</tissue>
        <tissue>Uterine endothelium</tissue>
    </source>
</reference>
<reference key="3">
    <citation type="journal article" date="2004" name="Genome Res.">
        <title>The status, quality, and expansion of the NIH full-length cDNA project: the Mammalian Gene Collection (MGC).</title>
        <authorList>
            <consortium name="The MGC Project Team"/>
        </authorList>
    </citation>
    <scope>NUCLEOTIDE SEQUENCE [LARGE SCALE MRNA]</scope>
    <source>
        <tissue>Skin</tissue>
    </source>
</reference>
<reference key="4">
    <citation type="journal article" date="2011" name="BMC Syst. Biol.">
        <title>Initial characterization of the human central proteome.</title>
        <authorList>
            <person name="Burkard T.R."/>
            <person name="Planyavsky M."/>
            <person name="Kaupe I."/>
            <person name="Breitwieser F.P."/>
            <person name="Buerckstuemmer T."/>
            <person name="Bennett K.L."/>
            <person name="Superti-Furga G."/>
            <person name="Colinge J."/>
        </authorList>
    </citation>
    <scope>IDENTIFICATION BY MASS SPECTROMETRY [LARGE SCALE ANALYSIS]</scope>
</reference>
<reference key="5">
    <citation type="journal article" date="2014" name="Nat. Commun.">
        <title>Global profiling of co- and post-translationally N-myristoylated proteomes in human cells.</title>
        <authorList>
            <person name="Thinon E."/>
            <person name="Serwa R.A."/>
            <person name="Broncel M."/>
            <person name="Brannigan J.A."/>
            <person name="Brassat U."/>
            <person name="Wright M.H."/>
            <person name="Heal W.P."/>
            <person name="Wilkinson A.J."/>
            <person name="Mann D.J."/>
            <person name="Tate E.W."/>
        </authorList>
    </citation>
    <scope>MYRISTOYLATION AT GLY-2</scope>
    <scope>CLEAVAGE OF INITIATOR METHIONINE</scope>
    <scope>IDENTIFICATION BY MASS SPECTROMETRY</scope>
</reference>
<reference key="6">
    <citation type="journal article" date="2015" name="Proteomics">
        <title>N-terminome analysis of the human mitochondrial proteome.</title>
        <authorList>
            <person name="Vaca Jacome A.S."/>
            <person name="Rabilloud T."/>
            <person name="Schaeffer-Reiss C."/>
            <person name="Rompais M."/>
            <person name="Ayoub D."/>
            <person name="Lane L."/>
            <person name="Bairoch A."/>
            <person name="Van Dorsselaer A."/>
            <person name="Carapito C."/>
        </authorList>
    </citation>
    <scope>IDENTIFICATION BY MASS SPECTROMETRY [LARGE SCALE ANALYSIS]</scope>
</reference>
<evidence type="ECO:0000269" key="1">
    <source>
    </source>
</evidence>
<evidence type="ECO:0000305" key="2"/>
<keyword id="KW-0433">Leucine-rich repeat</keyword>
<keyword id="KW-0449">Lipoprotein</keyword>
<keyword id="KW-0472">Membrane</keyword>
<keyword id="KW-0519">Myristate</keyword>
<keyword id="KW-1267">Proteomics identification</keyword>
<keyword id="KW-1185">Reference proteome</keyword>
<keyword id="KW-0677">Repeat</keyword>
<gene>
    <name type="primary">LRRC57</name>
</gene>
<accession>Q8N9N7</accession>
<accession>Q7Z2Z6</accession>
<accession>Q8N1T6</accession>
<protein>
    <recommendedName>
        <fullName>Leucine-rich repeat-containing protein 57</fullName>
    </recommendedName>
</protein>